<reference key="1">
    <citation type="submission" date="2008-04" db="EMBL/GenBank/DDBJ databases">
        <title>Complete sequence of chromosome of Exiguobacterium sibiricum 255-15.</title>
        <authorList>
            <consortium name="US DOE Joint Genome Institute"/>
            <person name="Copeland A."/>
            <person name="Lucas S."/>
            <person name="Lapidus A."/>
            <person name="Glavina del Rio T."/>
            <person name="Dalin E."/>
            <person name="Tice H."/>
            <person name="Bruce D."/>
            <person name="Goodwin L."/>
            <person name="Pitluck S."/>
            <person name="Kiss H."/>
            <person name="Chertkov O."/>
            <person name="Monk C."/>
            <person name="Brettin T."/>
            <person name="Detter J.C."/>
            <person name="Han C."/>
            <person name="Kuske C.R."/>
            <person name="Schmutz J."/>
            <person name="Larimer F."/>
            <person name="Land M."/>
            <person name="Hauser L."/>
            <person name="Kyrpides N."/>
            <person name="Mikhailova N."/>
            <person name="Vishnivetskaya T."/>
            <person name="Rodrigues D.F."/>
            <person name="Gilichinsky D."/>
            <person name="Tiedje J."/>
            <person name="Richardson P."/>
        </authorList>
    </citation>
    <scope>NUCLEOTIDE SEQUENCE [LARGE SCALE GENOMIC DNA]</scope>
    <source>
        <strain>DSM 17290 / CCUG 55495 / CIP 109462 / JCM 13490 / 255-15</strain>
    </source>
</reference>
<protein>
    <recommendedName>
        <fullName evidence="1">Glycine--tRNA ligase alpha subunit</fullName>
        <ecNumber evidence="1">6.1.1.14</ecNumber>
    </recommendedName>
    <alternativeName>
        <fullName evidence="1">Glycyl-tRNA synthetase alpha subunit</fullName>
        <shortName evidence="1">GlyRS</shortName>
    </alternativeName>
</protein>
<feature type="chain" id="PRO_1000101189" description="Glycine--tRNA ligase alpha subunit">
    <location>
        <begin position="1"/>
        <end position="296"/>
    </location>
</feature>
<sequence length="296" mass="34284">MTVQEMILTLQKFWAEQGCLTMQAYDVEKGAGTMNPMTFLRSLGPEPWNVCYTEPSRRPADGRYGENPNRLYQHHQFQVIMKPSPDNIQELYLQSLELLGINPLEHDIRFVEDNWENPTFGAAGLGWEVWLNGMEITQFTYFQQVGGIECNPIAVEITYGIERLASYIQDVESVFDLVWTDGFKYGDIFYQPEFEHSKYTFETSDVDLLFTLFDQYEKEANRALDENLVFPAYDYILKCSHTFNLLDAKGAISVTERTGFIHRVRNMSRRCAQSFIEERERLGFPLIKSKAGESHA</sequence>
<gene>
    <name evidence="1" type="primary">glyQ</name>
    <name type="ordered locus">Exig_0827</name>
</gene>
<keyword id="KW-0030">Aminoacyl-tRNA synthetase</keyword>
<keyword id="KW-0067">ATP-binding</keyword>
<keyword id="KW-0963">Cytoplasm</keyword>
<keyword id="KW-0436">Ligase</keyword>
<keyword id="KW-0547">Nucleotide-binding</keyword>
<keyword id="KW-0648">Protein biosynthesis</keyword>
<keyword id="KW-1185">Reference proteome</keyword>
<dbReference type="EC" id="6.1.1.14" evidence="1"/>
<dbReference type="EMBL" id="CP001022">
    <property type="protein sequence ID" value="ACB60307.1"/>
    <property type="molecule type" value="Genomic_DNA"/>
</dbReference>
<dbReference type="RefSeq" id="WP_012369731.1">
    <property type="nucleotide sequence ID" value="NC_010556.1"/>
</dbReference>
<dbReference type="SMR" id="B1YL75"/>
<dbReference type="STRING" id="262543.Exig_0827"/>
<dbReference type="KEGG" id="esi:Exig_0827"/>
<dbReference type="eggNOG" id="COG0752">
    <property type="taxonomic scope" value="Bacteria"/>
</dbReference>
<dbReference type="HOGENOM" id="CLU_057066_1_0_9"/>
<dbReference type="OrthoDB" id="9802183at2"/>
<dbReference type="Proteomes" id="UP000001681">
    <property type="component" value="Chromosome"/>
</dbReference>
<dbReference type="GO" id="GO:0005829">
    <property type="term" value="C:cytosol"/>
    <property type="evidence" value="ECO:0007669"/>
    <property type="project" value="TreeGrafter"/>
</dbReference>
<dbReference type="GO" id="GO:0005524">
    <property type="term" value="F:ATP binding"/>
    <property type="evidence" value="ECO:0007669"/>
    <property type="project" value="UniProtKB-UniRule"/>
</dbReference>
<dbReference type="GO" id="GO:0140096">
    <property type="term" value="F:catalytic activity, acting on a protein"/>
    <property type="evidence" value="ECO:0007669"/>
    <property type="project" value="UniProtKB-ARBA"/>
</dbReference>
<dbReference type="GO" id="GO:0004820">
    <property type="term" value="F:glycine-tRNA ligase activity"/>
    <property type="evidence" value="ECO:0007669"/>
    <property type="project" value="UniProtKB-UniRule"/>
</dbReference>
<dbReference type="GO" id="GO:0016740">
    <property type="term" value="F:transferase activity"/>
    <property type="evidence" value="ECO:0007669"/>
    <property type="project" value="UniProtKB-ARBA"/>
</dbReference>
<dbReference type="GO" id="GO:0006426">
    <property type="term" value="P:glycyl-tRNA aminoacylation"/>
    <property type="evidence" value="ECO:0007669"/>
    <property type="project" value="UniProtKB-UniRule"/>
</dbReference>
<dbReference type="CDD" id="cd00733">
    <property type="entry name" value="GlyRS_alpha_core"/>
    <property type="match status" value="1"/>
</dbReference>
<dbReference type="FunFam" id="3.30.930.10:FF:000006">
    <property type="entry name" value="Glycine--tRNA ligase alpha subunit"/>
    <property type="match status" value="1"/>
</dbReference>
<dbReference type="Gene3D" id="3.30.930.10">
    <property type="entry name" value="Bira Bifunctional Protein, Domain 2"/>
    <property type="match status" value="1"/>
</dbReference>
<dbReference type="Gene3D" id="1.20.58.180">
    <property type="entry name" value="Class II aaRS and biotin synthetases, domain 2"/>
    <property type="match status" value="1"/>
</dbReference>
<dbReference type="HAMAP" id="MF_00254">
    <property type="entry name" value="Gly_tRNA_synth_alpha"/>
    <property type="match status" value="1"/>
</dbReference>
<dbReference type="InterPro" id="IPR045864">
    <property type="entry name" value="aa-tRNA-synth_II/BPL/LPL"/>
</dbReference>
<dbReference type="InterPro" id="IPR006194">
    <property type="entry name" value="Gly-tRNA-synth_heterodimer"/>
</dbReference>
<dbReference type="InterPro" id="IPR002310">
    <property type="entry name" value="Gly-tRNA_ligase_asu"/>
</dbReference>
<dbReference type="NCBIfam" id="TIGR00388">
    <property type="entry name" value="glyQ"/>
    <property type="match status" value="1"/>
</dbReference>
<dbReference type="NCBIfam" id="NF006827">
    <property type="entry name" value="PRK09348.1"/>
    <property type="match status" value="1"/>
</dbReference>
<dbReference type="PANTHER" id="PTHR30075:SF2">
    <property type="entry name" value="GLYCINE--TRNA LIGASE, CHLOROPLASTIC_MITOCHONDRIAL 2"/>
    <property type="match status" value="1"/>
</dbReference>
<dbReference type="PANTHER" id="PTHR30075">
    <property type="entry name" value="GLYCYL-TRNA SYNTHETASE"/>
    <property type="match status" value="1"/>
</dbReference>
<dbReference type="Pfam" id="PF02091">
    <property type="entry name" value="tRNA-synt_2e"/>
    <property type="match status" value="1"/>
</dbReference>
<dbReference type="PRINTS" id="PR01044">
    <property type="entry name" value="TRNASYNTHGA"/>
</dbReference>
<dbReference type="SUPFAM" id="SSF55681">
    <property type="entry name" value="Class II aaRS and biotin synthetases"/>
    <property type="match status" value="1"/>
</dbReference>
<dbReference type="PROSITE" id="PS50861">
    <property type="entry name" value="AA_TRNA_LIGASE_II_GLYAB"/>
    <property type="match status" value="1"/>
</dbReference>
<comment type="catalytic activity">
    <reaction evidence="1">
        <text>tRNA(Gly) + glycine + ATP = glycyl-tRNA(Gly) + AMP + diphosphate</text>
        <dbReference type="Rhea" id="RHEA:16013"/>
        <dbReference type="Rhea" id="RHEA-COMP:9664"/>
        <dbReference type="Rhea" id="RHEA-COMP:9683"/>
        <dbReference type="ChEBI" id="CHEBI:30616"/>
        <dbReference type="ChEBI" id="CHEBI:33019"/>
        <dbReference type="ChEBI" id="CHEBI:57305"/>
        <dbReference type="ChEBI" id="CHEBI:78442"/>
        <dbReference type="ChEBI" id="CHEBI:78522"/>
        <dbReference type="ChEBI" id="CHEBI:456215"/>
        <dbReference type="EC" id="6.1.1.14"/>
    </reaction>
</comment>
<comment type="subunit">
    <text evidence="1">Tetramer of two alpha and two beta subunits.</text>
</comment>
<comment type="subcellular location">
    <subcellularLocation>
        <location evidence="1">Cytoplasm</location>
    </subcellularLocation>
</comment>
<comment type="similarity">
    <text evidence="1">Belongs to the class-II aminoacyl-tRNA synthetase family.</text>
</comment>
<organism>
    <name type="scientific">Exiguobacterium sibiricum (strain DSM 17290 / CCUG 55495 / CIP 109462 / JCM 13490 / 255-15)</name>
    <dbReference type="NCBI Taxonomy" id="262543"/>
    <lineage>
        <taxon>Bacteria</taxon>
        <taxon>Bacillati</taxon>
        <taxon>Bacillota</taxon>
        <taxon>Bacilli</taxon>
        <taxon>Bacillales</taxon>
        <taxon>Bacillales Family XII. Incertae Sedis</taxon>
        <taxon>Exiguobacterium</taxon>
    </lineage>
</organism>
<proteinExistence type="inferred from homology"/>
<evidence type="ECO:0000255" key="1">
    <source>
        <dbReference type="HAMAP-Rule" id="MF_00254"/>
    </source>
</evidence>
<accession>B1YL75</accession>
<name>SYGA_EXIS2</name>